<feature type="chain" id="PRO_0000370955" description="ATP synthase subunit delta">
    <location>
        <begin position="1"/>
        <end position="181"/>
    </location>
</feature>
<dbReference type="EMBL" id="CU633749">
    <property type="protein sequence ID" value="CAQ71015.1"/>
    <property type="molecule type" value="Genomic_DNA"/>
</dbReference>
<dbReference type="RefSeq" id="WP_012354281.1">
    <property type="nucleotide sequence ID" value="NC_010528.1"/>
</dbReference>
<dbReference type="SMR" id="B3R7L8"/>
<dbReference type="GeneID" id="29763072"/>
<dbReference type="KEGG" id="cti:RALTA_A3095"/>
<dbReference type="eggNOG" id="COG0712">
    <property type="taxonomic scope" value="Bacteria"/>
</dbReference>
<dbReference type="HOGENOM" id="CLU_085114_3_0_4"/>
<dbReference type="BioCyc" id="CTAI977880:RALTA_RS15135-MONOMER"/>
<dbReference type="Proteomes" id="UP000001692">
    <property type="component" value="Chromosome 1"/>
</dbReference>
<dbReference type="GO" id="GO:0005886">
    <property type="term" value="C:plasma membrane"/>
    <property type="evidence" value="ECO:0007669"/>
    <property type="project" value="UniProtKB-SubCell"/>
</dbReference>
<dbReference type="GO" id="GO:0045259">
    <property type="term" value="C:proton-transporting ATP synthase complex"/>
    <property type="evidence" value="ECO:0007669"/>
    <property type="project" value="UniProtKB-KW"/>
</dbReference>
<dbReference type="GO" id="GO:0046933">
    <property type="term" value="F:proton-transporting ATP synthase activity, rotational mechanism"/>
    <property type="evidence" value="ECO:0007669"/>
    <property type="project" value="UniProtKB-UniRule"/>
</dbReference>
<dbReference type="Gene3D" id="1.10.520.20">
    <property type="entry name" value="N-terminal domain of the delta subunit of the F1F0-ATP synthase"/>
    <property type="match status" value="1"/>
</dbReference>
<dbReference type="HAMAP" id="MF_01416">
    <property type="entry name" value="ATP_synth_delta_bact"/>
    <property type="match status" value="1"/>
</dbReference>
<dbReference type="InterPro" id="IPR026015">
    <property type="entry name" value="ATP_synth_OSCP/delta_N_sf"/>
</dbReference>
<dbReference type="InterPro" id="IPR000711">
    <property type="entry name" value="ATPase_OSCP/dsu"/>
</dbReference>
<dbReference type="NCBIfam" id="TIGR01145">
    <property type="entry name" value="ATP_synt_delta"/>
    <property type="match status" value="1"/>
</dbReference>
<dbReference type="NCBIfam" id="NF004402">
    <property type="entry name" value="PRK05758.2-2"/>
    <property type="match status" value="1"/>
</dbReference>
<dbReference type="PANTHER" id="PTHR11910">
    <property type="entry name" value="ATP SYNTHASE DELTA CHAIN"/>
    <property type="match status" value="1"/>
</dbReference>
<dbReference type="Pfam" id="PF00213">
    <property type="entry name" value="OSCP"/>
    <property type="match status" value="1"/>
</dbReference>
<dbReference type="PRINTS" id="PR00125">
    <property type="entry name" value="ATPASEDELTA"/>
</dbReference>
<dbReference type="SUPFAM" id="SSF47928">
    <property type="entry name" value="N-terminal domain of the delta subunit of the F1F0-ATP synthase"/>
    <property type="match status" value="1"/>
</dbReference>
<accession>B3R7L8</accession>
<sequence length="181" mass="19229">MAETATIARPYAEALFRVASESSAGNLGAWSELVSEMGQVAANPDMKAVADDPNVPGDKLAELFLSVLKSPVSDEARRFVQLLVENGRLTVMPDIAEQFHALKNAREGSSDVEITSAFPLEDGQLNDLVAALERKFGRKLYAQVAVDPSLIGGVSVKVGDEVLDTSVRARLAAMQTALTAA</sequence>
<gene>
    <name evidence="1" type="primary">atpH</name>
    <name type="ordered locus">RALTA_A3095</name>
</gene>
<comment type="function">
    <text evidence="1">F(1)F(0) ATP synthase produces ATP from ADP in the presence of a proton or sodium gradient. F-type ATPases consist of two structural domains, F(1) containing the extramembraneous catalytic core and F(0) containing the membrane proton channel, linked together by a central stalk and a peripheral stalk. During catalysis, ATP synthesis in the catalytic domain of F(1) is coupled via a rotary mechanism of the central stalk subunits to proton translocation.</text>
</comment>
<comment type="function">
    <text evidence="1">This protein is part of the stalk that links CF(0) to CF(1). It either transmits conformational changes from CF(0) to CF(1) or is implicated in proton conduction.</text>
</comment>
<comment type="subunit">
    <text evidence="1">F-type ATPases have 2 components, F(1) - the catalytic core - and F(0) - the membrane proton channel. F(1) has five subunits: alpha(3), beta(3), gamma(1), delta(1), epsilon(1). F(0) has three main subunits: a(1), b(2) and c(10-14). The alpha and beta chains form an alternating ring which encloses part of the gamma chain. F(1) is attached to F(0) by a central stalk formed by the gamma and epsilon chains, while a peripheral stalk is formed by the delta and b chains.</text>
</comment>
<comment type="subcellular location">
    <subcellularLocation>
        <location evidence="1">Cell inner membrane</location>
        <topology evidence="1">Peripheral membrane protein</topology>
    </subcellularLocation>
</comment>
<comment type="similarity">
    <text evidence="1">Belongs to the ATPase delta chain family.</text>
</comment>
<keyword id="KW-0066">ATP synthesis</keyword>
<keyword id="KW-0997">Cell inner membrane</keyword>
<keyword id="KW-1003">Cell membrane</keyword>
<keyword id="KW-0139">CF(1)</keyword>
<keyword id="KW-0375">Hydrogen ion transport</keyword>
<keyword id="KW-0406">Ion transport</keyword>
<keyword id="KW-0472">Membrane</keyword>
<keyword id="KW-0813">Transport</keyword>
<reference key="1">
    <citation type="journal article" date="2008" name="Genome Res.">
        <title>Genome sequence of the beta-rhizobium Cupriavidus taiwanensis and comparative genomics of rhizobia.</title>
        <authorList>
            <person name="Amadou C."/>
            <person name="Pascal G."/>
            <person name="Mangenot S."/>
            <person name="Glew M."/>
            <person name="Bontemps C."/>
            <person name="Capela D."/>
            <person name="Carrere S."/>
            <person name="Cruveiller S."/>
            <person name="Dossat C."/>
            <person name="Lajus A."/>
            <person name="Marchetti M."/>
            <person name="Poinsot V."/>
            <person name="Rouy Z."/>
            <person name="Servin B."/>
            <person name="Saad M."/>
            <person name="Schenowitz C."/>
            <person name="Barbe V."/>
            <person name="Batut J."/>
            <person name="Medigue C."/>
            <person name="Masson-Boivin C."/>
        </authorList>
    </citation>
    <scope>NUCLEOTIDE SEQUENCE [LARGE SCALE GENOMIC DNA]</scope>
    <source>
        <strain>DSM 17343 / BCRC 17206 / CCUG 44338 / CIP 107171 / LMG 19424 / R1</strain>
    </source>
</reference>
<evidence type="ECO:0000255" key="1">
    <source>
        <dbReference type="HAMAP-Rule" id="MF_01416"/>
    </source>
</evidence>
<protein>
    <recommendedName>
        <fullName evidence="1">ATP synthase subunit delta</fullName>
    </recommendedName>
    <alternativeName>
        <fullName evidence="1">ATP synthase F(1) sector subunit delta</fullName>
    </alternativeName>
    <alternativeName>
        <fullName evidence="1">F-type ATPase subunit delta</fullName>
        <shortName evidence="1">F-ATPase subunit delta</shortName>
    </alternativeName>
</protein>
<name>ATPD_CUPTR</name>
<organism>
    <name type="scientific">Cupriavidus taiwanensis (strain DSM 17343 / BCRC 17206 / CCUG 44338 / CIP 107171 / LMG 19424 / R1)</name>
    <name type="common">Ralstonia taiwanensis (strain LMG 19424)</name>
    <dbReference type="NCBI Taxonomy" id="977880"/>
    <lineage>
        <taxon>Bacteria</taxon>
        <taxon>Pseudomonadati</taxon>
        <taxon>Pseudomonadota</taxon>
        <taxon>Betaproteobacteria</taxon>
        <taxon>Burkholderiales</taxon>
        <taxon>Burkholderiaceae</taxon>
        <taxon>Cupriavidus</taxon>
    </lineage>
</organism>
<proteinExistence type="inferred from homology"/>